<comment type="function">
    <text evidence="2">Promotes dephosphorylation of tyrosine 3-monooxygenase TH which decreases TH catalytic activity and leads to reduced synthesis of catecholamines including dopamine, noradrenaline and adrenaline. The exact mechanism of activity is unknown but may act as a phosphatase or promote the activity of phosphatases or may inhibit phosphorylation by acting as a barrier to interfere with protein kinase access.</text>
</comment>
<comment type="subunit">
    <text evidence="2">Interacts with tyrosine 3-monooxygenase TH; the interaction results in reduced phosphorylation and decreased catalytic activity of TH.</text>
</comment>
<comment type="subcellular location">
    <subcellularLocation>
        <location evidence="2">Cytoplasm</location>
    </subcellularLocation>
</comment>
<comment type="alternative products">
    <event type="alternative splicing"/>
    <isoform>
        <id>Q9H857-1</id>
        <name>1</name>
        <sequence type="displayed"/>
    </isoform>
    <isoform>
        <id>Q9H857-2</id>
        <name>2</name>
        <sequence type="described" ref="VSP_019952"/>
    </isoform>
    <isoform>
        <id>Q9H857-3</id>
        <name>3</name>
        <sequence type="described" ref="VSP_019952 VSP_019953"/>
    </isoform>
    <isoform>
        <id>Q9H857-4</id>
        <name>4</name>
        <sequence type="described" ref="VSP_019951"/>
    </isoform>
</comment>
<comment type="similarity">
    <text evidence="4">Belongs to the 5'(3')-deoxyribonucleotidase family.</text>
</comment>
<comment type="sequence caution" evidence="4">
    <conflict type="erroneous initiation">
        <sequence resource="EMBL-CDS" id="AAH14550"/>
    </conflict>
    <text>Truncated N-terminus.</text>
</comment>
<comment type="sequence caution" evidence="4">
    <conflict type="erroneous initiation">
        <sequence resource="EMBL-CDS" id="BAB14064"/>
    </conflict>
    <text>Truncated N-terminus.</text>
</comment>
<dbReference type="EC" id="3.1.3.-"/>
<dbReference type="EMBL" id="AF131781">
    <property type="protein sequence ID" value="AAD20044.1"/>
    <property type="molecule type" value="mRNA"/>
</dbReference>
<dbReference type="EMBL" id="AK022504">
    <property type="protein sequence ID" value="BAB14064.1"/>
    <property type="status" value="ALT_INIT"/>
    <property type="molecule type" value="mRNA"/>
</dbReference>
<dbReference type="EMBL" id="AK023995">
    <property type="protein sequence ID" value="BAB14763.1"/>
    <property type="molecule type" value="mRNA"/>
</dbReference>
<dbReference type="EMBL" id="AC112215">
    <property type="status" value="NOT_ANNOTATED_CDS"/>
    <property type="molecule type" value="Genomic_DNA"/>
</dbReference>
<dbReference type="EMBL" id="BC014550">
    <property type="protein sequence ID" value="AAH14550.1"/>
    <property type="status" value="ALT_INIT"/>
    <property type="molecule type" value="mRNA"/>
</dbReference>
<dbReference type="CCDS" id="CCDS2858.1">
    <molecule id="Q9H857-1"/>
</dbReference>
<dbReference type="CCDS" id="CCDS46843.1">
    <molecule id="Q9H857-2"/>
</dbReference>
<dbReference type="RefSeq" id="NP_001127703.1">
    <molecule id="Q9H857-2"/>
    <property type="nucleotide sequence ID" value="NM_001134231.2"/>
</dbReference>
<dbReference type="RefSeq" id="NP_075059.1">
    <molecule id="Q9H857-1"/>
    <property type="nucleotide sequence ID" value="NM_022908.3"/>
</dbReference>
<dbReference type="RefSeq" id="XP_005265463.1">
    <property type="nucleotide sequence ID" value="XM_005265406.2"/>
</dbReference>
<dbReference type="RefSeq" id="XP_006713368.1">
    <property type="nucleotide sequence ID" value="XM_006713305.2"/>
</dbReference>
<dbReference type="SMR" id="Q9H857"/>
<dbReference type="BioGRID" id="122353">
    <property type="interactions" value="124"/>
</dbReference>
<dbReference type="FunCoup" id="Q9H857">
    <property type="interactions" value="904"/>
</dbReference>
<dbReference type="IntAct" id="Q9H857">
    <property type="interactions" value="37"/>
</dbReference>
<dbReference type="MINT" id="Q9H857"/>
<dbReference type="STRING" id="9606.ENSP00000406933"/>
<dbReference type="ChEMBL" id="CHEMBL4295945"/>
<dbReference type="DEPOD" id="NT5DC2"/>
<dbReference type="iPTMnet" id="Q9H857"/>
<dbReference type="PhosphoSitePlus" id="Q9H857"/>
<dbReference type="SwissPalm" id="Q9H857"/>
<dbReference type="BioMuta" id="NT5DC2"/>
<dbReference type="DMDM" id="74733765"/>
<dbReference type="jPOST" id="Q9H857"/>
<dbReference type="MassIVE" id="Q9H857"/>
<dbReference type="PaxDb" id="9606-ENSP00000406933"/>
<dbReference type="PeptideAtlas" id="Q9H857"/>
<dbReference type="ProteomicsDB" id="11660"/>
<dbReference type="ProteomicsDB" id="19043"/>
<dbReference type="ProteomicsDB" id="81179">
    <molecule id="Q9H857-1"/>
</dbReference>
<dbReference type="ProteomicsDB" id="81180">
    <molecule id="Q9H857-2"/>
</dbReference>
<dbReference type="ProteomicsDB" id="81181">
    <molecule id="Q9H857-3"/>
</dbReference>
<dbReference type="ProteomicsDB" id="81182">
    <molecule id="Q9H857-4"/>
</dbReference>
<dbReference type="Pumba" id="Q9H857"/>
<dbReference type="Antibodypedia" id="46180">
    <property type="antibodies" value="70 antibodies from 16 providers"/>
</dbReference>
<dbReference type="DNASU" id="64943"/>
<dbReference type="Ensembl" id="ENST00000307076.8">
    <molecule id="Q9H857-1"/>
    <property type="protein sequence ID" value="ENSP00000302468.4"/>
    <property type="gene ID" value="ENSG00000168268.11"/>
</dbReference>
<dbReference type="Ensembl" id="ENST00000422318.7">
    <molecule id="Q9H857-2"/>
    <property type="protein sequence ID" value="ENSP00000406933.2"/>
    <property type="gene ID" value="ENSG00000168268.11"/>
</dbReference>
<dbReference type="Ensembl" id="ENST00000459839.5">
    <molecule id="Q9H857-3"/>
    <property type="protein sequence ID" value="ENSP00000419547.1"/>
    <property type="gene ID" value="ENSG00000168268.11"/>
</dbReference>
<dbReference type="GeneID" id="64943"/>
<dbReference type="KEGG" id="hsa:64943"/>
<dbReference type="MANE-Select" id="ENST00000422318.7">
    <molecule id="Q9H857-2"/>
    <property type="protein sequence ID" value="ENSP00000406933.2"/>
    <property type="RefSeq nucleotide sequence ID" value="NM_001134231.2"/>
    <property type="RefSeq protein sequence ID" value="NP_001127703.1"/>
</dbReference>
<dbReference type="UCSC" id="uc003den.4">
    <molecule id="Q9H857-1"/>
    <property type="organism name" value="human"/>
</dbReference>
<dbReference type="AGR" id="HGNC:25717"/>
<dbReference type="CTD" id="64943"/>
<dbReference type="DisGeNET" id="64943"/>
<dbReference type="GeneCards" id="NT5DC2"/>
<dbReference type="HGNC" id="HGNC:25717">
    <property type="gene designation" value="NT5DC2"/>
</dbReference>
<dbReference type="HPA" id="ENSG00000168268">
    <property type="expression patterns" value="Low tissue specificity"/>
</dbReference>
<dbReference type="MIM" id="621077">
    <property type="type" value="gene"/>
</dbReference>
<dbReference type="neXtProt" id="NX_Q9H857"/>
<dbReference type="OpenTargets" id="ENSG00000168268"/>
<dbReference type="PharmGKB" id="PA143485561"/>
<dbReference type="VEuPathDB" id="HostDB:ENSG00000168268"/>
<dbReference type="eggNOG" id="KOG2470">
    <property type="taxonomic scope" value="Eukaryota"/>
</dbReference>
<dbReference type="GeneTree" id="ENSGT00940000159940"/>
<dbReference type="HOGENOM" id="CLU_017845_5_1_1"/>
<dbReference type="InParanoid" id="Q9H857"/>
<dbReference type="OMA" id="QWTHQPQ"/>
<dbReference type="OrthoDB" id="409330at2759"/>
<dbReference type="PAN-GO" id="Q9H857">
    <property type="GO annotations" value="1 GO annotation based on evolutionary models"/>
</dbReference>
<dbReference type="PhylomeDB" id="Q9H857"/>
<dbReference type="TreeFam" id="TF323990"/>
<dbReference type="PathwayCommons" id="Q9H857"/>
<dbReference type="SignaLink" id="Q9H857"/>
<dbReference type="BioGRID-ORCS" id="64943">
    <property type="hits" value="14 hits in 1158 CRISPR screens"/>
</dbReference>
<dbReference type="ChiTaRS" id="NT5DC2">
    <property type="organism name" value="human"/>
</dbReference>
<dbReference type="GenomeRNAi" id="64943"/>
<dbReference type="Pharos" id="Q9H857">
    <property type="development level" value="Tbio"/>
</dbReference>
<dbReference type="PRO" id="PR:Q9H857"/>
<dbReference type="Proteomes" id="UP000005640">
    <property type="component" value="Chromosome 3"/>
</dbReference>
<dbReference type="RNAct" id="Q9H857">
    <property type="molecule type" value="protein"/>
</dbReference>
<dbReference type="Bgee" id="ENSG00000168268">
    <property type="expression patterns" value="Expressed in ganglionic eminence and 147 other cell types or tissues"/>
</dbReference>
<dbReference type="ExpressionAtlas" id="Q9H857">
    <property type="expression patterns" value="baseline and differential"/>
</dbReference>
<dbReference type="GO" id="GO:0005737">
    <property type="term" value="C:cytoplasm"/>
    <property type="evidence" value="ECO:0000250"/>
    <property type="project" value="UniProtKB"/>
</dbReference>
<dbReference type="GO" id="GO:0005739">
    <property type="term" value="C:mitochondrion"/>
    <property type="evidence" value="ECO:0006056"/>
    <property type="project" value="FlyBase"/>
</dbReference>
<dbReference type="GO" id="GO:0008253">
    <property type="term" value="F:5'-nucleotidase activity"/>
    <property type="evidence" value="ECO:0000318"/>
    <property type="project" value="GO_Central"/>
</dbReference>
<dbReference type="GO" id="GO:0046872">
    <property type="term" value="F:metal ion binding"/>
    <property type="evidence" value="ECO:0007669"/>
    <property type="project" value="UniProtKB-KW"/>
</dbReference>
<dbReference type="GO" id="GO:0045914">
    <property type="term" value="P:negative regulation of catecholamine metabolic process"/>
    <property type="evidence" value="ECO:0000250"/>
    <property type="project" value="UniProtKB"/>
</dbReference>
<dbReference type="GO" id="GO:1903180">
    <property type="term" value="P:negative regulation of dopamine biosynthetic process"/>
    <property type="evidence" value="ECO:0000250"/>
    <property type="project" value="UniProtKB"/>
</dbReference>
<dbReference type="GO" id="GO:0051354">
    <property type="term" value="P:negative regulation of oxidoreductase activity"/>
    <property type="evidence" value="ECO:0000250"/>
    <property type="project" value="UniProtKB"/>
</dbReference>
<dbReference type="GO" id="GO:0033137">
    <property type="term" value="P:negative regulation of peptidyl-serine phosphorylation"/>
    <property type="evidence" value="ECO:0000250"/>
    <property type="project" value="UniProtKB"/>
</dbReference>
<dbReference type="CDD" id="cd07522">
    <property type="entry name" value="HAD_cN-II"/>
    <property type="match status" value="1"/>
</dbReference>
<dbReference type="FunFam" id="3.40.50.1000:FF:000026">
    <property type="entry name" value="NT5DC3 isoform 1"/>
    <property type="match status" value="1"/>
</dbReference>
<dbReference type="Gene3D" id="3.40.50.1000">
    <property type="entry name" value="HAD superfamily/HAD-like"/>
    <property type="match status" value="1"/>
</dbReference>
<dbReference type="InterPro" id="IPR036412">
    <property type="entry name" value="HAD-like_sf"/>
</dbReference>
<dbReference type="InterPro" id="IPR008380">
    <property type="entry name" value="HAD-SF_hydro_IG_5-nucl"/>
</dbReference>
<dbReference type="InterPro" id="IPR023214">
    <property type="entry name" value="HAD_sf"/>
</dbReference>
<dbReference type="InterPro" id="IPR016695">
    <property type="entry name" value="Pur_nucleotidase"/>
</dbReference>
<dbReference type="NCBIfam" id="TIGR02244">
    <property type="entry name" value="HAD-IG-Ncltidse"/>
    <property type="match status" value="1"/>
</dbReference>
<dbReference type="PANTHER" id="PTHR12103">
    <property type="entry name" value="5'-NUCLEOTIDASE DOMAIN-CONTAINING"/>
    <property type="match status" value="1"/>
</dbReference>
<dbReference type="PANTHER" id="PTHR12103:SF14">
    <property type="entry name" value="5'-NUCLEOTIDASE DOMAIN-CONTAINING PROTEIN 2"/>
    <property type="match status" value="1"/>
</dbReference>
<dbReference type="Pfam" id="PF05761">
    <property type="entry name" value="5_nucleotid"/>
    <property type="match status" value="1"/>
</dbReference>
<dbReference type="PIRSF" id="PIRSF017434">
    <property type="entry name" value="Purine_5'-nucleotidase"/>
    <property type="match status" value="1"/>
</dbReference>
<dbReference type="SUPFAM" id="SSF56784">
    <property type="entry name" value="HAD-like"/>
    <property type="match status" value="1"/>
</dbReference>
<sequence length="520" mass="60719">MRVESGSAQERGILLESLSTLLEKTTASHEGRAPGNRELTDLLPPEVCSLLNPAAIYANNEISLRDVEVYGFDYDYTLAQYADALHPEIFSTARDILIEHYKYPEGIRKYDYNPSFAIRGLHYDIQKSLLMKIDAFHYVQLGTAYRGLQPVPDEEVIELYGGTQHIPLYQMSGFYGKGPSIKQFMDIFSLPEMALLSCVVDYFLGHSLEFDQAHLYKDVTDAIRDVHVKGLMYQWIEQDMEKYILRGDETFAVLSRLVAHGKQLFLITNSPFSFVDKGMRHMVGPDWRQLFDVVIVQADKPSFFTDRRKPFRKLDEKGSLQWDRITRLEKGKIYRQGNLFDFLRLTEWRGPRVLYFGDHLYSDLADLMLRHGWRTGAIIPELEREIRIINTEQYMHSLTWQQALTGLLERMQTYQDAESRQVLAAWMKERQELRCITKALFNAQFGSIFRTFHNPTYFSRRLVRFSDLYMASLSCLLNYRVDFTFYPRRTPLQHEAPLWMDQLCTGCMKTPFLGDMAHIR</sequence>
<reference key="1">
    <citation type="submission" date="1999-02" db="EMBL/GenBank/DDBJ databases">
        <authorList>
            <person name="Mei G."/>
            <person name="Yu W."/>
            <person name="Gibbs R.A."/>
        </authorList>
    </citation>
    <scope>NUCLEOTIDE SEQUENCE [LARGE SCALE MRNA] (ISOFORM 4)</scope>
    <source>
        <tissue>Brain</tissue>
    </source>
</reference>
<reference key="2">
    <citation type="journal article" date="2004" name="Nat. Genet.">
        <title>Complete sequencing and characterization of 21,243 full-length human cDNAs.</title>
        <authorList>
            <person name="Ota T."/>
            <person name="Suzuki Y."/>
            <person name="Nishikawa T."/>
            <person name="Otsuki T."/>
            <person name="Sugiyama T."/>
            <person name="Irie R."/>
            <person name="Wakamatsu A."/>
            <person name="Hayashi K."/>
            <person name="Sato H."/>
            <person name="Nagai K."/>
            <person name="Kimura K."/>
            <person name="Makita H."/>
            <person name="Sekine M."/>
            <person name="Obayashi M."/>
            <person name="Nishi T."/>
            <person name="Shibahara T."/>
            <person name="Tanaka T."/>
            <person name="Ishii S."/>
            <person name="Yamamoto J."/>
            <person name="Saito K."/>
            <person name="Kawai Y."/>
            <person name="Isono Y."/>
            <person name="Nakamura Y."/>
            <person name="Nagahari K."/>
            <person name="Murakami K."/>
            <person name="Yasuda T."/>
            <person name="Iwayanagi T."/>
            <person name="Wagatsuma M."/>
            <person name="Shiratori A."/>
            <person name="Sudo H."/>
            <person name="Hosoiri T."/>
            <person name="Kaku Y."/>
            <person name="Kodaira H."/>
            <person name="Kondo H."/>
            <person name="Sugawara M."/>
            <person name="Takahashi M."/>
            <person name="Kanda K."/>
            <person name="Yokoi T."/>
            <person name="Furuya T."/>
            <person name="Kikkawa E."/>
            <person name="Omura Y."/>
            <person name="Abe K."/>
            <person name="Kamihara K."/>
            <person name="Katsuta N."/>
            <person name="Sato K."/>
            <person name="Tanikawa M."/>
            <person name="Yamazaki M."/>
            <person name="Ninomiya K."/>
            <person name="Ishibashi T."/>
            <person name="Yamashita H."/>
            <person name="Murakawa K."/>
            <person name="Fujimori K."/>
            <person name="Tanai H."/>
            <person name="Kimata M."/>
            <person name="Watanabe M."/>
            <person name="Hiraoka S."/>
            <person name="Chiba Y."/>
            <person name="Ishida S."/>
            <person name="Ono Y."/>
            <person name="Takiguchi S."/>
            <person name="Watanabe S."/>
            <person name="Yosida M."/>
            <person name="Hotuta T."/>
            <person name="Kusano J."/>
            <person name="Kanehori K."/>
            <person name="Takahashi-Fujii A."/>
            <person name="Hara H."/>
            <person name="Tanase T.-O."/>
            <person name="Nomura Y."/>
            <person name="Togiya S."/>
            <person name="Komai F."/>
            <person name="Hara R."/>
            <person name="Takeuchi K."/>
            <person name="Arita M."/>
            <person name="Imose N."/>
            <person name="Musashino K."/>
            <person name="Yuuki H."/>
            <person name="Oshima A."/>
            <person name="Sasaki N."/>
            <person name="Aotsuka S."/>
            <person name="Yoshikawa Y."/>
            <person name="Matsunawa H."/>
            <person name="Ichihara T."/>
            <person name="Shiohata N."/>
            <person name="Sano S."/>
            <person name="Moriya S."/>
            <person name="Momiyama H."/>
            <person name="Satoh N."/>
            <person name="Takami S."/>
            <person name="Terashima Y."/>
            <person name="Suzuki O."/>
            <person name="Nakagawa S."/>
            <person name="Senoh A."/>
            <person name="Mizoguchi H."/>
            <person name="Goto Y."/>
            <person name="Shimizu F."/>
            <person name="Wakebe H."/>
            <person name="Hishigaki H."/>
            <person name="Watanabe T."/>
            <person name="Sugiyama A."/>
            <person name="Takemoto M."/>
            <person name="Kawakami B."/>
            <person name="Yamazaki M."/>
            <person name="Watanabe K."/>
            <person name="Kumagai A."/>
            <person name="Itakura S."/>
            <person name="Fukuzumi Y."/>
            <person name="Fujimori Y."/>
            <person name="Komiyama M."/>
            <person name="Tashiro H."/>
            <person name="Tanigami A."/>
            <person name="Fujiwara T."/>
            <person name="Ono T."/>
            <person name="Yamada K."/>
            <person name="Fujii Y."/>
            <person name="Ozaki K."/>
            <person name="Hirao M."/>
            <person name="Ohmori Y."/>
            <person name="Kawabata A."/>
            <person name="Hikiji T."/>
            <person name="Kobatake N."/>
            <person name="Inagaki H."/>
            <person name="Ikema Y."/>
            <person name="Okamoto S."/>
            <person name="Okitani R."/>
            <person name="Kawakami T."/>
            <person name="Noguchi S."/>
            <person name="Itoh T."/>
            <person name="Shigeta K."/>
            <person name="Senba T."/>
            <person name="Matsumura K."/>
            <person name="Nakajima Y."/>
            <person name="Mizuno T."/>
            <person name="Morinaga M."/>
            <person name="Sasaki M."/>
            <person name="Togashi T."/>
            <person name="Oyama M."/>
            <person name="Hata H."/>
            <person name="Watanabe M."/>
            <person name="Komatsu T."/>
            <person name="Mizushima-Sugano J."/>
            <person name="Satoh T."/>
            <person name="Shirai Y."/>
            <person name="Takahashi Y."/>
            <person name="Nakagawa K."/>
            <person name="Okumura K."/>
            <person name="Nagase T."/>
            <person name="Nomura N."/>
            <person name="Kikuchi H."/>
            <person name="Masuho Y."/>
            <person name="Yamashita R."/>
            <person name="Nakai K."/>
            <person name="Yada T."/>
            <person name="Nakamura Y."/>
            <person name="Ohara O."/>
            <person name="Isogai T."/>
            <person name="Sugano S."/>
        </authorList>
    </citation>
    <scope>NUCLEOTIDE SEQUENCE [LARGE SCALE MRNA] (ISOFORM 1)</scope>
    <scope>PARTIAL NUCLEOTIDE SEQUENCE [LARGE SCALE MRNA] (ISOFORM 2)</scope>
    <source>
        <tissue>Retinoblastoma</tissue>
        <tissue>Teratocarcinoma</tissue>
    </source>
</reference>
<reference key="3">
    <citation type="journal article" date="2006" name="Nature">
        <title>The DNA sequence, annotation and analysis of human chromosome 3.</title>
        <authorList>
            <person name="Muzny D.M."/>
            <person name="Scherer S.E."/>
            <person name="Kaul R."/>
            <person name="Wang J."/>
            <person name="Yu J."/>
            <person name="Sudbrak R."/>
            <person name="Buhay C.J."/>
            <person name="Chen R."/>
            <person name="Cree A."/>
            <person name="Ding Y."/>
            <person name="Dugan-Rocha S."/>
            <person name="Gill R."/>
            <person name="Gunaratne P."/>
            <person name="Harris R.A."/>
            <person name="Hawes A.C."/>
            <person name="Hernandez J."/>
            <person name="Hodgson A.V."/>
            <person name="Hume J."/>
            <person name="Jackson A."/>
            <person name="Khan Z.M."/>
            <person name="Kovar-Smith C."/>
            <person name="Lewis L.R."/>
            <person name="Lozado R.J."/>
            <person name="Metzker M.L."/>
            <person name="Milosavljevic A."/>
            <person name="Miner G.R."/>
            <person name="Morgan M.B."/>
            <person name="Nazareth L.V."/>
            <person name="Scott G."/>
            <person name="Sodergren E."/>
            <person name="Song X.-Z."/>
            <person name="Steffen D."/>
            <person name="Wei S."/>
            <person name="Wheeler D.A."/>
            <person name="Wright M.W."/>
            <person name="Worley K.C."/>
            <person name="Yuan Y."/>
            <person name="Zhang Z."/>
            <person name="Adams C.Q."/>
            <person name="Ansari-Lari M.A."/>
            <person name="Ayele M."/>
            <person name="Brown M.J."/>
            <person name="Chen G."/>
            <person name="Chen Z."/>
            <person name="Clendenning J."/>
            <person name="Clerc-Blankenburg K.P."/>
            <person name="Chen R."/>
            <person name="Chen Z."/>
            <person name="Davis C."/>
            <person name="Delgado O."/>
            <person name="Dinh H.H."/>
            <person name="Dong W."/>
            <person name="Draper H."/>
            <person name="Ernst S."/>
            <person name="Fu G."/>
            <person name="Gonzalez-Garay M.L."/>
            <person name="Garcia D.K."/>
            <person name="Gillett W."/>
            <person name="Gu J."/>
            <person name="Hao B."/>
            <person name="Haugen E."/>
            <person name="Havlak P."/>
            <person name="He X."/>
            <person name="Hennig S."/>
            <person name="Hu S."/>
            <person name="Huang W."/>
            <person name="Jackson L.R."/>
            <person name="Jacob L.S."/>
            <person name="Kelly S.H."/>
            <person name="Kube M."/>
            <person name="Levy R."/>
            <person name="Li Z."/>
            <person name="Liu B."/>
            <person name="Liu J."/>
            <person name="Liu W."/>
            <person name="Lu J."/>
            <person name="Maheshwari M."/>
            <person name="Nguyen B.-V."/>
            <person name="Okwuonu G.O."/>
            <person name="Palmeiri A."/>
            <person name="Pasternak S."/>
            <person name="Perez L.M."/>
            <person name="Phelps K.A."/>
            <person name="Plopper F.J."/>
            <person name="Qiang B."/>
            <person name="Raymond C."/>
            <person name="Rodriguez R."/>
            <person name="Saenphimmachak C."/>
            <person name="Santibanez J."/>
            <person name="Shen H."/>
            <person name="Shen Y."/>
            <person name="Subramanian S."/>
            <person name="Tabor P.E."/>
            <person name="Verduzco D."/>
            <person name="Waldron L."/>
            <person name="Wang J."/>
            <person name="Wang J."/>
            <person name="Wang Q."/>
            <person name="Williams G.A."/>
            <person name="Wong G.K.-S."/>
            <person name="Yao Z."/>
            <person name="Zhang J."/>
            <person name="Zhang X."/>
            <person name="Zhao G."/>
            <person name="Zhou J."/>
            <person name="Zhou Y."/>
            <person name="Nelson D."/>
            <person name="Lehrach H."/>
            <person name="Reinhardt R."/>
            <person name="Naylor S.L."/>
            <person name="Yang H."/>
            <person name="Olson M."/>
            <person name="Weinstock G."/>
            <person name="Gibbs R.A."/>
        </authorList>
    </citation>
    <scope>NUCLEOTIDE SEQUENCE [LARGE SCALE GENOMIC DNA]</scope>
</reference>
<reference key="4">
    <citation type="journal article" date="2004" name="Genome Res.">
        <title>The status, quality, and expansion of the NIH full-length cDNA project: the Mammalian Gene Collection (MGC).</title>
        <authorList>
            <consortium name="The MGC Project Team"/>
        </authorList>
    </citation>
    <scope>PARTIAL NUCLEOTIDE SEQUENCE [LARGE SCALE MRNA] (ISOFORM 3)</scope>
    <source>
        <tissue>Brain</tissue>
    </source>
</reference>
<reference key="5">
    <citation type="journal article" date="2011" name="BMC Syst. Biol.">
        <title>Initial characterization of the human central proteome.</title>
        <authorList>
            <person name="Burkard T.R."/>
            <person name="Planyavsky M."/>
            <person name="Kaupe I."/>
            <person name="Breitwieser F.P."/>
            <person name="Buerckstuemmer T."/>
            <person name="Bennett K.L."/>
            <person name="Superti-Furga G."/>
            <person name="Colinge J."/>
        </authorList>
    </citation>
    <scope>IDENTIFICATION BY MASS SPECTROMETRY [LARGE SCALE ANALYSIS]</scope>
</reference>
<feature type="chain" id="PRO_0000247224" description="5'-nucleotidase domain-containing protein 2">
    <location>
        <begin position="1"/>
        <end position="520"/>
    </location>
</feature>
<feature type="active site" description="Nucleophile" evidence="1">
    <location>
        <position position="73"/>
    </location>
</feature>
<feature type="active site" description="Proton donor" evidence="1">
    <location>
        <position position="75"/>
    </location>
</feature>
<feature type="binding site" evidence="1">
    <location>
        <position position="73"/>
    </location>
    <ligand>
        <name>Mg(2+)</name>
        <dbReference type="ChEBI" id="CHEBI:18420"/>
    </ligand>
</feature>
<feature type="binding site" evidence="1">
    <location>
        <position position="75"/>
    </location>
    <ligand>
        <name>Mg(2+)</name>
        <dbReference type="ChEBI" id="CHEBI:18420"/>
    </ligand>
</feature>
<feature type="binding site" evidence="1">
    <location>
        <position position="358"/>
    </location>
    <ligand>
        <name>Mg(2+)</name>
        <dbReference type="ChEBI" id="CHEBI:18420"/>
    </ligand>
</feature>
<feature type="splice variant" id="VSP_019951" description="In isoform 4." evidence="3">
    <location>
        <begin position="1"/>
        <end position="130"/>
    </location>
</feature>
<feature type="splice variant" id="VSP_019952" description="In isoform 2 and isoform 3." evidence="4">
    <original>MRVESGSAQERGILLESLSTLLEKTTASHEGRAPGNRELT</original>
    <variation>MAGAGLRAAARRWLLCGGHGGPRAASSSPSCPGCGPPGPGAHCPGVPRSAPAQAPTSGADLSAHLWARYQDMRRLVH</variation>
    <location>
        <begin position="1"/>
        <end position="40"/>
    </location>
</feature>
<feature type="splice variant" id="VSP_019953" description="In isoform 3." evidence="4">
    <location>
        <begin position="103"/>
        <end position="127"/>
    </location>
</feature>
<feature type="sequence variant" id="VAR_034143" description="In dbSNP:rs35920544.">
    <original>S</original>
    <variation>R</variation>
    <location>
        <position position="91"/>
    </location>
</feature>
<feature type="sequence conflict" description="In Ref. 2; BAB14064." evidence="4" ref="2">
    <original>N</original>
    <variation>D</variation>
    <location>
        <position position="59"/>
    </location>
</feature>
<feature type="sequence conflict" description="In Ref. 2; BAB14064." evidence="4" ref="2">
    <original>C</original>
    <variation>R</variation>
    <location>
        <position position="475"/>
    </location>
</feature>
<feature type="sequence conflict" description="In Ref. 2; BAB14064." evidence="4" ref="2">
    <original>P</original>
    <variation>S</variation>
    <location>
        <position position="491"/>
    </location>
</feature>
<keyword id="KW-0025">Alternative splicing</keyword>
<keyword id="KW-0963">Cytoplasm</keyword>
<keyword id="KW-0378">Hydrolase</keyword>
<keyword id="KW-0460">Magnesium</keyword>
<keyword id="KW-0479">Metal-binding</keyword>
<keyword id="KW-1267">Proteomics identification</keyword>
<keyword id="KW-1185">Reference proteome</keyword>
<proteinExistence type="evidence at protein level"/>
<protein>
    <recommendedName>
        <fullName>5'-nucleotidase domain-containing protein 2</fullName>
        <ecNumber>3.1.3.-</ecNumber>
    </recommendedName>
</protein>
<evidence type="ECO:0000250" key="1">
    <source>
        <dbReference type="UniProtKB" id="P49902"/>
    </source>
</evidence>
<evidence type="ECO:0000250" key="2">
    <source>
        <dbReference type="UniProtKB" id="Q6Q0N3"/>
    </source>
</evidence>
<evidence type="ECO:0000303" key="3">
    <source ref="1"/>
</evidence>
<evidence type="ECO:0000305" key="4"/>
<organism>
    <name type="scientific">Homo sapiens</name>
    <name type="common">Human</name>
    <dbReference type="NCBI Taxonomy" id="9606"/>
    <lineage>
        <taxon>Eukaryota</taxon>
        <taxon>Metazoa</taxon>
        <taxon>Chordata</taxon>
        <taxon>Craniata</taxon>
        <taxon>Vertebrata</taxon>
        <taxon>Euteleostomi</taxon>
        <taxon>Mammalia</taxon>
        <taxon>Eutheria</taxon>
        <taxon>Euarchontoglires</taxon>
        <taxon>Primates</taxon>
        <taxon>Haplorrhini</taxon>
        <taxon>Catarrhini</taxon>
        <taxon>Hominidae</taxon>
        <taxon>Homo</taxon>
    </lineage>
</organism>
<gene>
    <name type="primary">NT5DC2</name>
</gene>
<name>NT5D2_HUMAN</name>
<accession>Q9H857</accession>
<accession>C9JTZ6</accession>
<accession>E9PAL9</accession>
<accession>O95888</accession>
<accession>Q96C80</accession>
<accession>Q9H9Z8</accession>